<gene>
    <name evidence="1" type="primary">ureB</name>
    <name type="ordered locus">Pcryo_0881</name>
</gene>
<name>URE2_PSYCK</name>
<dbReference type="EC" id="3.5.1.5" evidence="1"/>
<dbReference type="EMBL" id="CP000323">
    <property type="protein sequence ID" value="ABE74662.1"/>
    <property type="molecule type" value="Genomic_DNA"/>
</dbReference>
<dbReference type="RefSeq" id="WP_011513223.1">
    <property type="nucleotide sequence ID" value="NC_007969.1"/>
</dbReference>
<dbReference type="SMR" id="Q1QCE1"/>
<dbReference type="STRING" id="335284.Pcryo_0881"/>
<dbReference type="KEGG" id="pcr:Pcryo_0881"/>
<dbReference type="eggNOG" id="COG0832">
    <property type="taxonomic scope" value="Bacteria"/>
</dbReference>
<dbReference type="HOGENOM" id="CLU_129707_1_1_6"/>
<dbReference type="UniPathway" id="UPA00258">
    <property type="reaction ID" value="UER00370"/>
</dbReference>
<dbReference type="Proteomes" id="UP000002425">
    <property type="component" value="Chromosome"/>
</dbReference>
<dbReference type="GO" id="GO:0035550">
    <property type="term" value="C:urease complex"/>
    <property type="evidence" value="ECO:0007669"/>
    <property type="project" value="InterPro"/>
</dbReference>
<dbReference type="GO" id="GO:0009039">
    <property type="term" value="F:urease activity"/>
    <property type="evidence" value="ECO:0007669"/>
    <property type="project" value="UniProtKB-UniRule"/>
</dbReference>
<dbReference type="GO" id="GO:0043419">
    <property type="term" value="P:urea catabolic process"/>
    <property type="evidence" value="ECO:0007669"/>
    <property type="project" value="UniProtKB-UniRule"/>
</dbReference>
<dbReference type="CDD" id="cd00407">
    <property type="entry name" value="Urease_beta"/>
    <property type="match status" value="1"/>
</dbReference>
<dbReference type="FunFam" id="2.10.150.10:FF:000001">
    <property type="entry name" value="Urease subunit beta"/>
    <property type="match status" value="1"/>
</dbReference>
<dbReference type="Gene3D" id="2.10.150.10">
    <property type="entry name" value="Urease, beta subunit"/>
    <property type="match status" value="1"/>
</dbReference>
<dbReference type="HAMAP" id="MF_01954">
    <property type="entry name" value="Urease_beta"/>
    <property type="match status" value="1"/>
</dbReference>
<dbReference type="InterPro" id="IPR002019">
    <property type="entry name" value="Urease_beta-like"/>
</dbReference>
<dbReference type="InterPro" id="IPR036461">
    <property type="entry name" value="Urease_betasu_sf"/>
</dbReference>
<dbReference type="InterPro" id="IPR050069">
    <property type="entry name" value="Urease_subunit"/>
</dbReference>
<dbReference type="NCBIfam" id="NF009682">
    <property type="entry name" value="PRK13203.1"/>
    <property type="match status" value="1"/>
</dbReference>
<dbReference type="NCBIfam" id="TIGR00192">
    <property type="entry name" value="urease_beta"/>
    <property type="match status" value="1"/>
</dbReference>
<dbReference type="PANTHER" id="PTHR33569">
    <property type="entry name" value="UREASE"/>
    <property type="match status" value="1"/>
</dbReference>
<dbReference type="PANTHER" id="PTHR33569:SF1">
    <property type="entry name" value="UREASE"/>
    <property type="match status" value="1"/>
</dbReference>
<dbReference type="Pfam" id="PF00699">
    <property type="entry name" value="Urease_beta"/>
    <property type="match status" value="1"/>
</dbReference>
<dbReference type="SUPFAM" id="SSF51278">
    <property type="entry name" value="Urease, beta-subunit"/>
    <property type="match status" value="1"/>
</dbReference>
<proteinExistence type="inferred from homology"/>
<keyword id="KW-0963">Cytoplasm</keyword>
<keyword id="KW-0378">Hydrolase</keyword>
<accession>Q1QCE1</accession>
<reference key="1">
    <citation type="submission" date="2006-03" db="EMBL/GenBank/DDBJ databases">
        <title>Complete sequence of chromosome of Psychrobacter cryohalolentis K5.</title>
        <authorList>
            <consortium name="US DOE Joint Genome Institute"/>
            <person name="Copeland A."/>
            <person name="Lucas S."/>
            <person name="Lapidus A."/>
            <person name="Barry K."/>
            <person name="Detter J.C."/>
            <person name="Glavina T."/>
            <person name="Hammon N."/>
            <person name="Israni S."/>
            <person name="Dalin E."/>
            <person name="Tice H."/>
            <person name="Pitluck S."/>
            <person name="Brettin T."/>
            <person name="Bruce D."/>
            <person name="Han C."/>
            <person name="Tapia R."/>
            <person name="Sims D.R."/>
            <person name="Gilna P."/>
            <person name="Schmutz J."/>
            <person name="Larimer F."/>
            <person name="Land M."/>
            <person name="Hauser L."/>
            <person name="Kyrpides N."/>
            <person name="Kim E."/>
            <person name="Richardson P."/>
        </authorList>
    </citation>
    <scope>NUCLEOTIDE SEQUENCE [LARGE SCALE GENOMIC DNA]</scope>
    <source>
        <strain>ATCC BAA-1226 / DSM 17306 / VKM B-2378 / K5</strain>
    </source>
</reference>
<evidence type="ECO:0000255" key="1">
    <source>
        <dbReference type="HAMAP-Rule" id="MF_01954"/>
    </source>
</evidence>
<feature type="chain" id="PRO_0000239895" description="Urease subunit beta">
    <location>
        <begin position="1"/>
        <end position="111"/>
    </location>
</feature>
<comment type="catalytic activity">
    <reaction evidence="1">
        <text>urea + 2 H2O + H(+) = hydrogencarbonate + 2 NH4(+)</text>
        <dbReference type="Rhea" id="RHEA:20557"/>
        <dbReference type="ChEBI" id="CHEBI:15377"/>
        <dbReference type="ChEBI" id="CHEBI:15378"/>
        <dbReference type="ChEBI" id="CHEBI:16199"/>
        <dbReference type="ChEBI" id="CHEBI:17544"/>
        <dbReference type="ChEBI" id="CHEBI:28938"/>
        <dbReference type="EC" id="3.5.1.5"/>
    </reaction>
</comment>
<comment type="pathway">
    <text evidence="1">Nitrogen metabolism; urea degradation; CO(2) and NH(3) from urea (urease route): step 1/1.</text>
</comment>
<comment type="subunit">
    <text evidence="1">Heterotrimer of UreA (gamma), UreB (beta) and UreC (alpha) subunits. Three heterotrimers associate to form the active enzyme.</text>
</comment>
<comment type="subcellular location">
    <subcellularLocation>
        <location evidence="1">Cytoplasm</location>
    </subcellularLocation>
</comment>
<comment type="similarity">
    <text evidence="1">Belongs to the urease beta subunit family.</text>
</comment>
<organism>
    <name type="scientific">Psychrobacter cryohalolentis (strain ATCC BAA-1226 / DSM 17306 / VKM B-2378 / K5)</name>
    <dbReference type="NCBI Taxonomy" id="335284"/>
    <lineage>
        <taxon>Bacteria</taxon>
        <taxon>Pseudomonadati</taxon>
        <taxon>Pseudomonadota</taxon>
        <taxon>Gammaproteobacteria</taxon>
        <taxon>Moraxellales</taxon>
        <taxon>Moraxellaceae</taxon>
        <taxon>Psychrobacter</taxon>
    </lineage>
</organism>
<protein>
    <recommendedName>
        <fullName evidence="1">Urease subunit beta</fullName>
        <ecNumber evidence="1">3.5.1.5</ecNumber>
    </recommendedName>
    <alternativeName>
        <fullName evidence="1">Urea amidohydrolase subunit beta</fullName>
    </alternativeName>
</protein>
<sequence>MIPGEYQLKKGDIELCVGRDSFVIEVANTGDRPIQVGSHYHFAETNSALSFDRKKAYGHRLAIPAGTATRFEPGQKREVSLLPYAGLRRIFGFRGEVMGALDDNSDSGETR</sequence>